<proteinExistence type="inferred from homology"/>
<feature type="chain" id="PRO_0000093199" description="Uncharacterized ABC transporter ATP-binding protein HI_0354">
    <location>
        <begin position="1"/>
        <end position="240"/>
    </location>
</feature>
<feature type="domain" description="ABC transporter" evidence="1">
    <location>
        <begin position="2"/>
        <end position="223"/>
    </location>
</feature>
<feature type="binding site" evidence="1">
    <location>
        <begin position="34"/>
        <end position="41"/>
    </location>
    <ligand>
        <name>ATP</name>
        <dbReference type="ChEBI" id="CHEBI:30616"/>
    </ligand>
</feature>
<evidence type="ECO:0000255" key="1">
    <source>
        <dbReference type="PROSITE-ProRule" id="PRU00434"/>
    </source>
</evidence>
<evidence type="ECO:0000305" key="2"/>
<reference key="1">
    <citation type="journal article" date="1995" name="Science">
        <title>Whole-genome random sequencing and assembly of Haemophilus influenzae Rd.</title>
        <authorList>
            <person name="Fleischmann R.D."/>
            <person name="Adams M.D."/>
            <person name="White O."/>
            <person name="Clayton R.A."/>
            <person name="Kirkness E.F."/>
            <person name="Kerlavage A.R."/>
            <person name="Bult C.J."/>
            <person name="Tomb J.-F."/>
            <person name="Dougherty B.A."/>
            <person name="Merrick J.M."/>
            <person name="McKenney K."/>
            <person name="Sutton G.G."/>
            <person name="FitzHugh W."/>
            <person name="Fields C.A."/>
            <person name="Gocayne J.D."/>
            <person name="Scott J.D."/>
            <person name="Shirley R."/>
            <person name="Liu L.-I."/>
            <person name="Glodek A."/>
            <person name="Kelley J.M."/>
            <person name="Weidman J.F."/>
            <person name="Phillips C.A."/>
            <person name="Spriggs T."/>
            <person name="Hedblom E."/>
            <person name="Cotton M.D."/>
            <person name="Utterback T.R."/>
            <person name="Hanna M.C."/>
            <person name="Nguyen D.T."/>
            <person name="Saudek D.M."/>
            <person name="Brandon R.C."/>
            <person name="Fine L.D."/>
            <person name="Fritchman J.L."/>
            <person name="Fuhrmann J.L."/>
            <person name="Geoghagen N.S.M."/>
            <person name="Gnehm C.L."/>
            <person name="McDonald L.A."/>
            <person name="Small K.V."/>
            <person name="Fraser C.M."/>
            <person name="Smith H.O."/>
            <person name="Venter J.C."/>
        </authorList>
    </citation>
    <scope>NUCLEOTIDE SEQUENCE [LARGE SCALE GENOMIC DNA]</scope>
    <source>
        <strain>ATCC 51907 / DSM 11121 / KW20 / Rd</strain>
    </source>
</reference>
<comment type="similarity">
    <text evidence="2">Belongs to the ABC transporter superfamily.</text>
</comment>
<organism>
    <name type="scientific">Haemophilus influenzae (strain ATCC 51907 / DSM 11121 / KW20 / Rd)</name>
    <dbReference type="NCBI Taxonomy" id="71421"/>
    <lineage>
        <taxon>Bacteria</taxon>
        <taxon>Pseudomonadati</taxon>
        <taxon>Pseudomonadota</taxon>
        <taxon>Gammaproteobacteria</taxon>
        <taxon>Pasteurellales</taxon>
        <taxon>Pasteurellaceae</taxon>
        <taxon>Haemophilus</taxon>
    </lineage>
</organism>
<keyword id="KW-0067">ATP-binding</keyword>
<keyword id="KW-0547">Nucleotide-binding</keyword>
<keyword id="KW-1185">Reference proteome</keyword>
<keyword id="KW-0813">Transport</keyword>
<name>Y354_HAEIN</name>
<accession>P44656</accession>
<dbReference type="EMBL" id="L42023">
    <property type="protein sequence ID" value="AAC22014.1"/>
    <property type="molecule type" value="Genomic_DNA"/>
</dbReference>
<dbReference type="PIR" id="B64063">
    <property type="entry name" value="B64063"/>
</dbReference>
<dbReference type="RefSeq" id="NP_438517.1">
    <property type="nucleotide sequence ID" value="NC_000907.1"/>
</dbReference>
<dbReference type="SMR" id="P44656"/>
<dbReference type="STRING" id="71421.HI_0354"/>
<dbReference type="TCDB" id="3.A.1.17.3">
    <property type="family name" value="the atp-binding cassette (abc) superfamily"/>
</dbReference>
<dbReference type="EnsemblBacteria" id="AAC22014">
    <property type="protein sequence ID" value="AAC22014"/>
    <property type="gene ID" value="HI_0354"/>
</dbReference>
<dbReference type="KEGG" id="hin:HI_0354"/>
<dbReference type="PATRIC" id="fig|71421.8.peg.373"/>
<dbReference type="eggNOG" id="COG1116">
    <property type="taxonomic scope" value="Bacteria"/>
</dbReference>
<dbReference type="HOGENOM" id="CLU_000604_1_22_6"/>
<dbReference type="OrthoDB" id="9802264at2"/>
<dbReference type="PhylomeDB" id="P44656"/>
<dbReference type="BioCyc" id="HINF71421:G1GJ1-369-MONOMER"/>
<dbReference type="Proteomes" id="UP000000579">
    <property type="component" value="Chromosome"/>
</dbReference>
<dbReference type="GO" id="GO:0005524">
    <property type="term" value="F:ATP binding"/>
    <property type="evidence" value="ECO:0007669"/>
    <property type="project" value="UniProtKB-KW"/>
</dbReference>
<dbReference type="GO" id="GO:0016887">
    <property type="term" value="F:ATP hydrolysis activity"/>
    <property type="evidence" value="ECO:0007669"/>
    <property type="project" value="InterPro"/>
</dbReference>
<dbReference type="Gene3D" id="3.40.50.300">
    <property type="entry name" value="P-loop containing nucleotide triphosphate hydrolases"/>
    <property type="match status" value="1"/>
</dbReference>
<dbReference type="InterPro" id="IPR003593">
    <property type="entry name" value="AAA+_ATPase"/>
</dbReference>
<dbReference type="InterPro" id="IPR003439">
    <property type="entry name" value="ABC_transporter-like_ATP-bd"/>
</dbReference>
<dbReference type="InterPro" id="IPR017871">
    <property type="entry name" value="ABC_transporter-like_CS"/>
</dbReference>
<dbReference type="InterPro" id="IPR050166">
    <property type="entry name" value="ABC_transporter_ATP-bind"/>
</dbReference>
<dbReference type="InterPro" id="IPR027417">
    <property type="entry name" value="P-loop_NTPase"/>
</dbReference>
<dbReference type="PANTHER" id="PTHR42788:SF19">
    <property type="entry name" value="ALIPHATIC SULFONATES IMPORT ATP-BINDING PROTEIN SSUB 2"/>
    <property type="match status" value="1"/>
</dbReference>
<dbReference type="PANTHER" id="PTHR42788">
    <property type="entry name" value="TAURINE IMPORT ATP-BINDING PROTEIN-RELATED"/>
    <property type="match status" value="1"/>
</dbReference>
<dbReference type="Pfam" id="PF00005">
    <property type="entry name" value="ABC_tran"/>
    <property type="match status" value="1"/>
</dbReference>
<dbReference type="SMART" id="SM00382">
    <property type="entry name" value="AAA"/>
    <property type="match status" value="1"/>
</dbReference>
<dbReference type="SUPFAM" id="SSF52540">
    <property type="entry name" value="P-loop containing nucleoside triphosphate hydrolases"/>
    <property type="match status" value="1"/>
</dbReference>
<dbReference type="PROSITE" id="PS00211">
    <property type="entry name" value="ABC_TRANSPORTER_1"/>
    <property type="match status" value="1"/>
</dbReference>
<dbReference type="PROSITE" id="PS50893">
    <property type="entry name" value="ABC_TRANSPORTER_2"/>
    <property type="match status" value="1"/>
</dbReference>
<protein>
    <recommendedName>
        <fullName>Uncharacterized ABC transporter ATP-binding protein HI_0354</fullName>
    </recommendedName>
</protein>
<gene>
    <name type="ordered locus">HI_0354</name>
</gene>
<sequence length="240" mass="26931">MVRIQDLSLAFNGQTLFEHLNLTLLPNEWVSLLGSSGVGKSTLLRLLAGIETQGMVQGKILFEPKVRIAWLPQKETLYPWLSIVDNVQLQAVLFGRKSVKTTEKAKMLLEKVGMAAHWHKPCSQLSGGQKQRVALARTLMQEVDLILLDEPFSALDAISRHQLQDLAFELLEDKSVLLVTHDPQEALRLSQRIFVLRSPETHQTALSAVILPEGNAPRELHQANLWTLQQQLLQELGGEQ</sequence>